<reference key="1">
    <citation type="journal article" date="2004" name="Nat. Biotechnol.">
        <title>The genome sequence of the capnophilic rumen bacterium Mannheimia succiniciproducens.</title>
        <authorList>
            <person name="Hong S.H."/>
            <person name="Kim J.S."/>
            <person name="Lee S.Y."/>
            <person name="In Y.H."/>
            <person name="Choi S.S."/>
            <person name="Rih J.-K."/>
            <person name="Kim C.H."/>
            <person name="Jeong H."/>
            <person name="Hur C.G."/>
            <person name="Kim J.J."/>
        </authorList>
    </citation>
    <scope>NUCLEOTIDE SEQUENCE [LARGE SCALE GENOMIC DNA]</scope>
    <source>
        <strain>KCTC 0769BP / MBEL55E</strain>
    </source>
</reference>
<name>RPIA_MANSM</name>
<dbReference type="EC" id="5.3.1.6" evidence="1"/>
<dbReference type="EMBL" id="AE016827">
    <property type="protein sequence ID" value="AAU38351.1"/>
    <property type="molecule type" value="Genomic_DNA"/>
</dbReference>
<dbReference type="RefSeq" id="WP_011200910.1">
    <property type="nucleotide sequence ID" value="NC_006300.1"/>
</dbReference>
<dbReference type="SMR" id="Q65RQ9"/>
<dbReference type="STRING" id="221988.MS1744"/>
<dbReference type="KEGG" id="msu:MS1744"/>
<dbReference type="eggNOG" id="COG0120">
    <property type="taxonomic scope" value="Bacteria"/>
</dbReference>
<dbReference type="HOGENOM" id="CLU_056590_1_1_6"/>
<dbReference type="OrthoDB" id="5870696at2"/>
<dbReference type="UniPathway" id="UPA00115">
    <property type="reaction ID" value="UER00412"/>
</dbReference>
<dbReference type="Proteomes" id="UP000000607">
    <property type="component" value="Chromosome"/>
</dbReference>
<dbReference type="GO" id="GO:0005829">
    <property type="term" value="C:cytosol"/>
    <property type="evidence" value="ECO:0007669"/>
    <property type="project" value="TreeGrafter"/>
</dbReference>
<dbReference type="GO" id="GO:0004751">
    <property type="term" value="F:ribose-5-phosphate isomerase activity"/>
    <property type="evidence" value="ECO:0007669"/>
    <property type="project" value="UniProtKB-UniRule"/>
</dbReference>
<dbReference type="GO" id="GO:0006014">
    <property type="term" value="P:D-ribose metabolic process"/>
    <property type="evidence" value="ECO:0007669"/>
    <property type="project" value="TreeGrafter"/>
</dbReference>
<dbReference type="GO" id="GO:0009052">
    <property type="term" value="P:pentose-phosphate shunt, non-oxidative branch"/>
    <property type="evidence" value="ECO:0007669"/>
    <property type="project" value="UniProtKB-UniRule"/>
</dbReference>
<dbReference type="CDD" id="cd01398">
    <property type="entry name" value="RPI_A"/>
    <property type="match status" value="1"/>
</dbReference>
<dbReference type="FunFam" id="3.30.70.260:FF:000004">
    <property type="entry name" value="Ribose-5-phosphate isomerase A"/>
    <property type="match status" value="1"/>
</dbReference>
<dbReference type="FunFam" id="3.40.50.1360:FF:000001">
    <property type="entry name" value="Ribose-5-phosphate isomerase A"/>
    <property type="match status" value="1"/>
</dbReference>
<dbReference type="Gene3D" id="3.30.70.260">
    <property type="match status" value="1"/>
</dbReference>
<dbReference type="Gene3D" id="3.40.50.1360">
    <property type="match status" value="1"/>
</dbReference>
<dbReference type="HAMAP" id="MF_00170">
    <property type="entry name" value="Rib_5P_isom_A"/>
    <property type="match status" value="1"/>
</dbReference>
<dbReference type="InterPro" id="IPR037171">
    <property type="entry name" value="NagB/RpiA_transferase-like"/>
</dbReference>
<dbReference type="InterPro" id="IPR020672">
    <property type="entry name" value="Ribose5P_isomerase_typA_subgr"/>
</dbReference>
<dbReference type="InterPro" id="IPR004788">
    <property type="entry name" value="Ribose5P_isomerase_type_A"/>
</dbReference>
<dbReference type="NCBIfam" id="NF001924">
    <property type="entry name" value="PRK00702.1"/>
    <property type="match status" value="1"/>
</dbReference>
<dbReference type="NCBIfam" id="TIGR00021">
    <property type="entry name" value="rpiA"/>
    <property type="match status" value="1"/>
</dbReference>
<dbReference type="PANTHER" id="PTHR11934">
    <property type="entry name" value="RIBOSE-5-PHOSPHATE ISOMERASE"/>
    <property type="match status" value="1"/>
</dbReference>
<dbReference type="PANTHER" id="PTHR11934:SF0">
    <property type="entry name" value="RIBOSE-5-PHOSPHATE ISOMERASE"/>
    <property type="match status" value="1"/>
</dbReference>
<dbReference type="Pfam" id="PF06026">
    <property type="entry name" value="Rib_5-P_isom_A"/>
    <property type="match status" value="1"/>
</dbReference>
<dbReference type="SUPFAM" id="SSF75445">
    <property type="entry name" value="D-ribose-5-phosphate isomerase (RpiA), lid domain"/>
    <property type="match status" value="1"/>
</dbReference>
<dbReference type="SUPFAM" id="SSF100950">
    <property type="entry name" value="NagB/RpiA/CoA transferase-like"/>
    <property type="match status" value="1"/>
</dbReference>
<accession>Q65RQ9</accession>
<comment type="function">
    <text evidence="1">Catalyzes the reversible conversion of ribose-5-phosphate to ribulose 5-phosphate.</text>
</comment>
<comment type="catalytic activity">
    <reaction evidence="1">
        <text>aldehydo-D-ribose 5-phosphate = D-ribulose 5-phosphate</text>
        <dbReference type="Rhea" id="RHEA:14657"/>
        <dbReference type="ChEBI" id="CHEBI:58121"/>
        <dbReference type="ChEBI" id="CHEBI:58273"/>
        <dbReference type="EC" id="5.3.1.6"/>
    </reaction>
</comment>
<comment type="pathway">
    <text evidence="1">Carbohydrate degradation; pentose phosphate pathway; D-ribose 5-phosphate from D-ribulose 5-phosphate (non-oxidative stage): step 1/1.</text>
</comment>
<comment type="subunit">
    <text evidence="1">Homodimer.</text>
</comment>
<comment type="similarity">
    <text evidence="1">Belongs to the ribose 5-phosphate isomerase family.</text>
</comment>
<gene>
    <name evidence="1" type="primary">rpiA</name>
    <name type="ordered locus">MS1744</name>
</gene>
<protein>
    <recommendedName>
        <fullName evidence="1">Ribose-5-phosphate isomerase A</fullName>
        <ecNumber evidence="1">5.3.1.6</ecNumber>
    </recommendedName>
    <alternativeName>
        <fullName evidence="1">Phosphoriboisomerase A</fullName>
        <shortName evidence="1">PRI</shortName>
    </alternativeName>
</protein>
<sequence length="219" mass="23322">MNQLEMKKVAAKAALQFVKPDMIVGVGSGSTVNCFIEELGAFRDQIKGAVAASKASEELLRKQGIEVFSANDVSSLDIYVDGADEINPQKMMIKGGGAALTREKIVSSLAKNFICIVDSSKQVDILGSTFPLPVEVIPMARSQVARKLVALGGSPEWREGVITDNGNVILDVHNFIIMNPIEMEKELNNVAGVVTNGIFALNAAHTVIVGTPDGAKIIE</sequence>
<evidence type="ECO:0000255" key="1">
    <source>
        <dbReference type="HAMAP-Rule" id="MF_00170"/>
    </source>
</evidence>
<organism>
    <name type="scientific">Mannheimia succiniciproducens (strain KCTC 0769BP / MBEL55E)</name>
    <dbReference type="NCBI Taxonomy" id="221988"/>
    <lineage>
        <taxon>Bacteria</taxon>
        <taxon>Pseudomonadati</taxon>
        <taxon>Pseudomonadota</taxon>
        <taxon>Gammaproteobacteria</taxon>
        <taxon>Pasteurellales</taxon>
        <taxon>Pasteurellaceae</taxon>
        <taxon>Basfia</taxon>
    </lineage>
</organism>
<proteinExistence type="inferred from homology"/>
<feature type="chain" id="PRO_0000158435" description="Ribose-5-phosphate isomerase A">
    <location>
        <begin position="1"/>
        <end position="219"/>
    </location>
</feature>
<feature type="active site" description="Proton acceptor" evidence="1">
    <location>
        <position position="103"/>
    </location>
</feature>
<feature type="binding site" evidence="1">
    <location>
        <begin position="28"/>
        <end position="31"/>
    </location>
    <ligand>
        <name>substrate</name>
    </ligand>
</feature>
<feature type="binding site" evidence="1">
    <location>
        <begin position="81"/>
        <end position="84"/>
    </location>
    <ligand>
        <name>substrate</name>
    </ligand>
</feature>
<feature type="binding site" evidence="1">
    <location>
        <begin position="94"/>
        <end position="97"/>
    </location>
    <ligand>
        <name>substrate</name>
    </ligand>
</feature>
<feature type="binding site" evidence="1">
    <location>
        <position position="121"/>
    </location>
    <ligand>
        <name>substrate</name>
    </ligand>
</feature>
<keyword id="KW-0413">Isomerase</keyword>